<name>RS7_PROA2</name>
<reference key="1">
    <citation type="submission" date="2008-06" db="EMBL/GenBank/DDBJ databases">
        <title>Complete sequence of chromosome of Prosthecochloris aestuarii DSM 271.</title>
        <authorList>
            <consortium name="US DOE Joint Genome Institute"/>
            <person name="Lucas S."/>
            <person name="Copeland A."/>
            <person name="Lapidus A."/>
            <person name="Glavina del Rio T."/>
            <person name="Dalin E."/>
            <person name="Tice H."/>
            <person name="Bruce D."/>
            <person name="Goodwin L."/>
            <person name="Pitluck S."/>
            <person name="Schmutz J."/>
            <person name="Larimer F."/>
            <person name="Land M."/>
            <person name="Hauser L."/>
            <person name="Kyrpides N."/>
            <person name="Anderson I."/>
            <person name="Liu Z."/>
            <person name="Li T."/>
            <person name="Zhao F."/>
            <person name="Overmann J."/>
            <person name="Bryant D.A."/>
            <person name="Richardson P."/>
        </authorList>
    </citation>
    <scope>NUCLEOTIDE SEQUENCE [LARGE SCALE GENOMIC DNA]</scope>
    <source>
        <strain>DSM 271 / SK 413</strain>
    </source>
</reference>
<feature type="chain" id="PRO_1000125984" description="Small ribosomal subunit protein uS7">
    <location>
        <begin position="1"/>
        <end position="155"/>
    </location>
</feature>
<accession>B4S5N1</accession>
<sequence>MGKKGVYAGVKADFRYGDESVTRLINTIMSDGKKSVAAKIVYEAMDIIDAKVEDADALEVFRKALGNVAPLVEVRSKRVGGATYQIPMEVKPSRREALAFRWIKQFATRRGGRGMAEKLAAELLDAANEQGASVKKRDEVHRMADANKAFAHFRF</sequence>
<comment type="function">
    <text evidence="1">One of the primary rRNA binding proteins, it binds directly to 16S rRNA where it nucleates assembly of the head domain of the 30S subunit. Is located at the subunit interface close to the decoding center, probably blocks exit of the E-site tRNA.</text>
</comment>
<comment type="subunit">
    <text evidence="1">Part of the 30S ribosomal subunit. Contacts proteins S9 and S11.</text>
</comment>
<comment type="similarity">
    <text evidence="1">Belongs to the universal ribosomal protein uS7 family.</text>
</comment>
<dbReference type="EMBL" id="CP001108">
    <property type="protein sequence ID" value="ACF47078.1"/>
    <property type="molecule type" value="Genomic_DNA"/>
</dbReference>
<dbReference type="RefSeq" id="WP_012506610.1">
    <property type="nucleotide sequence ID" value="NC_011059.1"/>
</dbReference>
<dbReference type="SMR" id="B4S5N1"/>
<dbReference type="STRING" id="290512.Paes_2068"/>
<dbReference type="KEGG" id="paa:Paes_2068"/>
<dbReference type="eggNOG" id="COG0049">
    <property type="taxonomic scope" value="Bacteria"/>
</dbReference>
<dbReference type="HOGENOM" id="CLU_072226_1_1_10"/>
<dbReference type="Proteomes" id="UP000002725">
    <property type="component" value="Chromosome"/>
</dbReference>
<dbReference type="GO" id="GO:0015935">
    <property type="term" value="C:small ribosomal subunit"/>
    <property type="evidence" value="ECO:0007669"/>
    <property type="project" value="InterPro"/>
</dbReference>
<dbReference type="GO" id="GO:0019843">
    <property type="term" value="F:rRNA binding"/>
    <property type="evidence" value="ECO:0007669"/>
    <property type="project" value="UniProtKB-UniRule"/>
</dbReference>
<dbReference type="GO" id="GO:0003735">
    <property type="term" value="F:structural constituent of ribosome"/>
    <property type="evidence" value="ECO:0007669"/>
    <property type="project" value="InterPro"/>
</dbReference>
<dbReference type="GO" id="GO:0000049">
    <property type="term" value="F:tRNA binding"/>
    <property type="evidence" value="ECO:0007669"/>
    <property type="project" value="UniProtKB-UniRule"/>
</dbReference>
<dbReference type="GO" id="GO:0006412">
    <property type="term" value="P:translation"/>
    <property type="evidence" value="ECO:0007669"/>
    <property type="project" value="UniProtKB-UniRule"/>
</dbReference>
<dbReference type="CDD" id="cd14869">
    <property type="entry name" value="uS7_Bacteria"/>
    <property type="match status" value="1"/>
</dbReference>
<dbReference type="FunFam" id="1.10.455.10:FF:000001">
    <property type="entry name" value="30S ribosomal protein S7"/>
    <property type="match status" value="1"/>
</dbReference>
<dbReference type="Gene3D" id="1.10.455.10">
    <property type="entry name" value="Ribosomal protein S7 domain"/>
    <property type="match status" value="1"/>
</dbReference>
<dbReference type="HAMAP" id="MF_00480_B">
    <property type="entry name" value="Ribosomal_uS7_B"/>
    <property type="match status" value="1"/>
</dbReference>
<dbReference type="InterPro" id="IPR000235">
    <property type="entry name" value="Ribosomal_uS7"/>
</dbReference>
<dbReference type="InterPro" id="IPR005717">
    <property type="entry name" value="Ribosomal_uS7_bac/org-type"/>
</dbReference>
<dbReference type="InterPro" id="IPR023798">
    <property type="entry name" value="Ribosomal_uS7_dom"/>
</dbReference>
<dbReference type="InterPro" id="IPR036823">
    <property type="entry name" value="Ribosomal_uS7_dom_sf"/>
</dbReference>
<dbReference type="NCBIfam" id="TIGR01029">
    <property type="entry name" value="rpsG_bact"/>
    <property type="match status" value="1"/>
</dbReference>
<dbReference type="PANTHER" id="PTHR11205">
    <property type="entry name" value="RIBOSOMAL PROTEIN S7"/>
    <property type="match status" value="1"/>
</dbReference>
<dbReference type="Pfam" id="PF00177">
    <property type="entry name" value="Ribosomal_S7"/>
    <property type="match status" value="1"/>
</dbReference>
<dbReference type="PIRSF" id="PIRSF002122">
    <property type="entry name" value="RPS7p_RPS7a_RPS5e_RPS7o"/>
    <property type="match status" value="1"/>
</dbReference>
<dbReference type="SUPFAM" id="SSF47973">
    <property type="entry name" value="Ribosomal protein S7"/>
    <property type="match status" value="1"/>
</dbReference>
<keyword id="KW-0687">Ribonucleoprotein</keyword>
<keyword id="KW-0689">Ribosomal protein</keyword>
<keyword id="KW-0694">RNA-binding</keyword>
<keyword id="KW-0699">rRNA-binding</keyword>
<keyword id="KW-0820">tRNA-binding</keyword>
<gene>
    <name evidence="1" type="primary">rpsG</name>
    <name type="ordered locus">Paes_2068</name>
</gene>
<evidence type="ECO:0000255" key="1">
    <source>
        <dbReference type="HAMAP-Rule" id="MF_00480"/>
    </source>
</evidence>
<evidence type="ECO:0000305" key="2"/>
<organism>
    <name type="scientific">Prosthecochloris aestuarii (strain DSM 271 / SK 413)</name>
    <dbReference type="NCBI Taxonomy" id="290512"/>
    <lineage>
        <taxon>Bacteria</taxon>
        <taxon>Pseudomonadati</taxon>
        <taxon>Chlorobiota</taxon>
        <taxon>Chlorobiia</taxon>
        <taxon>Chlorobiales</taxon>
        <taxon>Chlorobiaceae</taxon>
        <taxon>Prosthecochloris</taxon>
    </lineage>
</organism>
<proteinExistence type="inferred from homology"/>
<protein>
    <recommendedName>
        <fullName evidence="1">Small ribosomal subunit protein uS7</fullName>
    </recommendedName>
    <alternativeName>
        <fullName evidence="2">30S ribosomal protein S7</fullName>
    </alternativeName>
</protein>